<reference key="1">
    <citation type="submission" date="2007-02" db="EMBL/GenBank/DDBJ databases">
        <title>Complete sequence of chromosome of Shewanella baltica OS155.</title>
        <authorList>
            <consortium name="US DOE Joint Genome Institute"/>
            <person name="Copeland A."/>
            <person name="Lucas S."/>
            <person name="Lapidus A."/>
            <person name="Barry K."/>
            <person name="Detter J.C."/>
            <person name="Glavina del Rio T."/>
            <person name="Hammon N."/>
            <person name="Israni S."/>
            <person name="Dalin E."/>
            <person name="Tice H."/>
            <person name="Pitluck S."/>
            <person name="Sims D.R."/>
            <person name="Brettin T."/>
            <person name="Bruce D."/>
            <person name="Han C."/>
            <person name="Tapia R."/>
            <person name="Brainard J."/>
            <person name="Schmutz J."/>
            <person name="Larimer F."/>
            <person name="Land M."/>
            <person name="Hauser L."/>
            <person name="Kyrpides N."/>
            <person name="Mikhailova N."/>
            <person name="Brettar I."/>
            <person name="Klappenbach J."/>
            <person name="Konstantinidis K."/>
            <person name="Rodrigues J."/>
            <person name="Tiedje J."/>
            <person name="Richardson P."/>
        </authorList>
    </citation>
    <scope>NUCLEOTIDE SEQUENCE [LARGE SCALE GENOMIC DNA]</scope>
    <source>
        <strain>OS155 / ATCC BAA-1091</strain>
    </source>
</reference>
<dbReference type="EC" id="2.1.2.9" evidence="1"/>
<dbReference type="EMBL" id="CP000563">
    <property type="protein sequence ID" value="ABN59567.1"/>
    <property type="molecule type" value="Genomic_DNA"/>
</dbReference>
<dbReference type="RefSeq" id="WP_011845353.1">
    <property type="nucleotide sequence ID" value="NC_009052.1"/>
</dbReference>
<dbReference type="SMR" id="A3CYK4"/>
<dbReference type="STRING" id="325240.Sbal_0031"/>
<dbReference type="KEGG" id="sbl:Sbal_0031"/>
<dbReference type="HOGENOM" id="CLU_033347_1_2_6"/>
<dbReference type="OrthoDB" id="9802815at2"/>
<dbReference type="Proteomes" id="UP000001557">
    <property type="component" value="Chromosome"/>
</dbReference>
<dbReference type="GO" id="GO:0005829">
    <property type="term" value="C:cytosol"/>
    <property type="evidence" value="ECO:0007669"/>
    <property type="project" value="TreeGrafter"/>
</dbReference>
<dbReference type="GO" id="GO:0004479">
    <property type="term" value="F:methionyl-tRNA formyltransferase activity"/>
    <property type="evidence" value="ECO:0007669"/>
    <property type="project" value="UniProtKB-UniRule"/>
</dbReference>
<dbReference type="CDD" id="cd08646">
    <property type="entry name" value="FMT_core_Met-tRNA-FMT_N"/>
    <property type="match status" value="1"/>
</dbReference>
<dbReference type="CDD" id="cd08704">
    <property type="entry name" value="Met_tRNA_FMT_C"/>
    <property type="match status" value="1"/>
</dbReference>
<dbReference type="FunFam" id="3.40.50.12230:FF:000001">
    <property type="entry name" value="Methionyl-tRNA formyltransferase"/>
    <property type="match status" value="1"/>
</dbReference>
<dbReference type="FunFam" id="3.40.50.170:FF:000003">
    <property type="entry name" value="Methionyl-tRNA formyltransferase"/>
    <property type="match status" value="1"/>
</dbReference>
<dbReference type="Gene3D" id="3.10.25.10">
    <property type="entry name" value="Formyl transferase, C-terminal domain"/>
    <property type="match status" value="1"/>
</dbReference>
<dbReference type="Gene3D" id="3.40.50.170">
    <property type="entry name" value="Formyl transferase, N-terminal domain"/>
    <property type="match status" value="1"/>
</dbReference>
<dbReference type="HAMAP" id="MF_00182">
    <property type="entry name" value="Formyl_trans"/>
    <property type="match status" value="1"/>
</dbReference>
<dbReference type="InterPro" id="IPR005794">
    <property type="entry name" value="Fmt"/>
</dbReference>
<dbReference type="InterPro" id="IPR005793">
    <property type="entry name" value="Formyl_trans_C"/>
</dbReference>
<dbReference type="InterPro" id="IPR037022">
    <property type="entry name" value="Formyl_trans_C_sf"/>
</dbReference>
<dbReference type="InterPro" id="IPR002376">
    <property type="entry name" value="Formyl_transf_N"/>
</dbReference>
<dbReference type="InterPro" id="IPR036477">
    <property type="entry name" value="Formyl_transf_N_sf"/>
</dbReference>
<dbReference type="InterPro" id="IPR011034">
    <property type="entry name" value="Formyl_transferase-like_C_sf"/>
</dbReference>
<dbReference type="InterPro" id="IPR001555">
    <property type="entry name" value="GART_AS"/>
</dbReference>
<dbReference type="InterPro" id="IPR044135">
    <property type="entry name" value="Met-tRNA-FMT_C"/>
</dbReference>
<dbReference type="InterPro" id="IPR041711">
    <property type="entry name" value="Met-tRNA-FMT_N"/>
</dbReference>
<dbReference type="NCBIfam" id="TIGR00460">
    <property type="entry name" value="fmt"/>
    <property type="match status" value="1"/>
</dbReference>
<dbReference type="PANTHER" id="PTHR11138">
    <property type="entry name" value="METHIONYL-TRNA FORMYLTRANSFERASE"/>
    <property type="match status" value="1"/>
</dbReference>
<dbReference type="PANTHER" id="PTHR11138:SF5">
    <property type="entry name" value="METHIONYL-TRNA FORMYLTRANSFERASE, MITOCHONDRIAL"/>
    <property type="match status" value="1"/>
</dbReference>
<dbReference type="Pfam" id="PF02911">
    <property type="entry name" value="Formyl_trans_C"/>
    <property type="match status" value="1"/>
</dbReference>
<dbReference type="Pfam" id="PF00551">
    <property type="entry name" value="Formyl_trans_N"/>
    <property type="match status" value="1"/>
</dbReference>
<dbReference type="SUPFAM" id="SSF50486">
    <property type="entry name" value="FMT C-terminal domain-like"/>
    <property type="match status" value="1"/>
</dbReference>
<dbReference type="SUPFAM" id="SSF53328">
    <property type="entry name" value="Formyltransferase"/>
    <property type="match status" value="1"/>
</dbReference>
<dbReference type="PROSITE" id="PS00373">
    <property type="entry name" value="GART"/>
    <property type="match status" value="1"/>
</dbReference>
<sequence>MKPLNIIFAGTPDFAARHLQALLNSHHNVIGVYTQPDRPAGRGKKLTASPVKELAVANNIPVYQPGSLRKEPAQQELAALNADIMVVVAYGLILPKVVLDTPRLGCINVHGSILPRWRGAAPIQRALWAGDKETGVTVMQMDVGLDTGDMLLKTTLPIEDSDTSASLYEKLAEQGPVALLQALEGLANGTLAAEKQDEALANYAEKLSKEEARLDWNKSAQQLWQEVRAFNPWPVSYFEHQGNTIKVWQTQVSETTSTAAPGTIISASKKGIEVATADGVLTLLNMQLPGKKPLNVADILNARGEWFSPNTRLANEAQ</sequence>
<accession>A3CYK4</accession>
<organism>
    <name type="scientific">Shewanella baltica (strain OS155 / ATCC BAA-1091)</name>
    <dbReference type="NCBI Taxonomy" id="325240"/>
    <lineage>
        <taxon>Bacteria</taxon>
        <taxon>Pseudomonadati</taxon>
        <taxon>Pseudomonadota</taxon>
        <taxon>Gammaproteobacteria</taxon>
        <taxon>Alteromonadales</taxon>
        <taxon>Shewanellaceae</taxon>
        <taxon>Shewanella</taxon>
    </lineage>
</organism>
<proteinExistence type="inferred from homology"/>
<gene>
    <name evidence="1" type="primary">fmt</name>
    <name type="ordered locus">Sbal_0031</name>
</gene>
<keyword id="KW-0648">Protein biosynthesis</keyword>
<keyword id="KW-1185">Reference proteome</keyword>
<keyword id="KW-0808">Transferase</keyword>
<evidence type="ECO:0000255" key="1">
    <source>
        <dbReference type="HAMAP-Rule" id="MF_00182"/>
    </source>
</evidence>
<feature type="chain" id="PRO_1000020152" description="Methionyl-tRNA formyltransferase">
    <location>
        <begin position="1"/>
        <end position="318"/>
    </location>
</feature>
<feature type="binding site" evidence="1">
    <location>
        <begin position="112"/>
        <end position="115"/>
    </location>
    <ligand>
        <name>(6S)-5,6,7,8-tetrahydrofolate</name>
        <dbReference type="ChEBI" id="CHEBI:57453"/>
    </ligand>
</feature>
<comment type="function">
    <text evidence="1">Attaches a formyl group to the free amino group of methionyl-tRNA(fMet). The formyl group appears to play a dual role in the initiator identity of N-formylmethionyl-tRNA by promoting its recognition by IF2 and preventing the misappropriation of this tRNA by the elongation apparatus.</text>
</comment>
<comment type="catalytic activity">
    <reaction evidence="1">
        <text>L-methionyl-tRNA(fMet) + (6R)-10-formyltetrahydrofolate = N-formyl-L-methionyl-tRNA(fMet) + (6S)-5,6,7,8-tetrahydrofolate + H(+)</text>
        <dbReference type="Rhea" id="RHEA:24380"/>
        <dbReference type="Rhea" id="RHEA-COMP:9952"/>
        <dbReference type="Rhea" id="RHEA-COMP:9953"/>
        <dbReference type="ChEBI" id="CHEBI:15378"/>
        <dbReference type="ChEBI" id="CHEBI:57453"/>
        <dbReference type="ChEBI" id="CHEBI:78530"/>
        <dbReference type="ChEBI" id="CHEBI:78844"/>
        <dbReference type="ChEBI" id="CHEBI:195366"/>
        <dbReference type="EC" id="2.1.2.9"/>
    </reaction>
</comment>
<comment type="similarity">
    <text evidence="1">Belongs to the Fmt family.</text>
</comment>
<name>FMT_SHEB5</name>
<protein>
    <recommendedName>
        <fullName evidence="1">Methionyl-tRNA formyltransferase</fullName>
        <ecNumber evidence="1">2.1.2.9</ecNumber>
    </recommendedName>
</protein>